<comment type="subcellular location">
    <subcellularLocation>
        <location evidence="2">Nucleus</location>
    </subcellularLocation>
</comment>
<comment type="alternative products">
    <event type="alternative splicing"/>
    <isoform>
        <id>O64702-1</id>
        <name>1</name>
        <sequence type="displayed"/>
    </isoform>
    <isoform>
        <id>O64702-2</id>
        <name>2</name>
        <sequence type="described" ref="VSP_039946"/>
    </isoform>
</comment>
<comment type="similarity">
    <text evidence="4">Belongs to the HMGB family.</text>
</comment>
<accession>O64702</accession>
<accession>Q2V430</accession>
<gene>
    <name type="primary">HMGB14</name>
    <name type="synonym">NFD14</name>
    <name type="ordered locus">At2g34450</name>
    <name type="ORF">F13P17.25</name>
</gene>
<keyword id="KW-0025">Alternative splicing</keyword>
<keyword id="KW-0238">DNA-binding</keyword>
<keyword id="KW-0539">Nucleus</keyword>
<keyword id="KW-0597">Phosphoprotein</keyword>
<keyword id="KW-1185">Reference proteome</keyword>
<reference key="1">
    <citation type="journal article" date="1999" name="Nature">
        <title>Sequence and analysis of chromosome 2 of the plant Arabidopsis thaliana.</title>
        <authorList>
            <person name="Lin X."/>
            <person name="Kaul S."/>
            <person name="Rounsley S.D."/>
            <person name="Shea T.P."/>
            <person name="Benito M.-I."/>
            <person name="Town C.D."/>
            <person name="Fujii C.Y."/>
            <person name="Mason T.M."/>
            <person name="Bowman C.L."/>
            <person name="Barnstead M.E."/>
            <person name="Feldblyum T.V."/>
            <person name="Buell C.R."/>
            <person name="Ketchum K.A."/>
            <person name="Lee J.J."/>
            <person name="Ronning C.M."/>
            <person name="Koo H.L."/>
            <person name="Moffat K.S."/>
            <person name="Cronin L.A."/>
            <person name="Shen M."/>
            <person name="Pai G."/>
            <person name="Van Aken S."/>
            <person name="Umayam L."/>
            <person name="Tallon L.J."/>
            <person name="Gill J.E."/>
            <person name="Adams M.D."/>
            <person name="Carrera A.J."/>
            <person name="Creasy T.H."/>
            <person name="Goodman H.M."/>
            <person name="Somerville C.R."/>
            <person name="Copenhaver G.P."/>
            <person name="Preuss D."/>
            <person name="Nierman W.C."/>
            <person name="White O."/>
            <person name="Eisen J.A."/>
            <person name="Salzberg S.L."/>
            <person name="Fraser C.M."/>
            <person name="Venter J.C."/>
        </authorList>
    </citation>
    <scope>NUCLEOTIDE SEQUENCE [LARGE SCALE GENOMIC DNA]</scope>
    <source>
        <strain>cv. Columbia</strain>
    </source>
</reference>
<reference key="2">
    <citation type="journal article" date="2017" name="Plant J.">
        <title>Araport11: a complete reannotation of the Arabidopsis thaliana reference genome.</title>
        <authorList>
            <person name="Cheng C.Y."/>
            <person name="Krishnakumar V."/>
            <person name="Chan A.P."/>
            <person name="Thibaud-Nissen F."/>
            <person name="Schobel S."/>
            <person name="Town C.D."/>
        </authorList>
    </citation>
    <scope>GENOME REANNOTATION</scope>
    <source>
        <strain>cv. Columbia</strain>
    </source>
</reference>
<reference key="3">
    <citation type="journal article" date="2002" name="Science">
        <title>Functional annotation of a full-length Arabidopsis cDNA collection.</title>
        <authorList>
            <person name="Seki M."/>
            <person name="Narusaka M."/>
            <person name="Kamiya A."/>
            <person name="Ishida J."/>
            <person name="Satou M."/>
            <person name="Sakurai T."/>
            <person name="Nakajima M."/>
            <person name="Enju A."/>
            <person name="Akiyama K."/>
            <person name="Oono Y."/>
            <person name="Muramatsu M."/>
            <person name="Hayashizaki Y."/>
            <person name="Kawai J."/>
            <person name="Carninci P."/>
            <person name="Itoh M."/>
            <person name="Ishii Y."/>
            <person name="Arakawa T."/>
            <person name="Shibata K."/>
            <person name="Shinagawa A."/>
            <person name="Shinozaki K."/>
        </authorList>
    </citation>
    <scope>NUCLEOTIDE SEQUENCE [LARGE SCALE MRNA] (ISOFORM 1)</scope>
    <source>
        <strain>cv. Columbia</strain>
    </source>
</reference>
<reference key="4">
    <citation type="journal article" date="2003" name="Science">
        <title>Empirical analysis of transcriptional activity in the Arabidopsis genome.</title>
        <authorList>
            <person name="Yamada K."/>
            <person name="Lim J."/>
            <person name="Dale J.M."/>
            <person name="Chen H."/>
            <person name="Shinn P."/>
            <person name="Palm C.J."/>
            <person name="Southwick A.M."/>
            <person name="Wu H.C."/>
            <person name="Kim C.J."/>
            <person name="Nguyen M."/>
            <person name="Pham P.K."/>
            <person name="Cheuk R.F."/>
            <person name="Karlin-Newmann G."/>
            <person name="Liu S.X."/>
            <person name="Lam B."/>
            <person name="Sakano H."/>
            <person name="Wu T."/>
            <person name="Yu G."/>
            <person name="Miranda M."/>
            <person name="Quach H.L."/>
            <person name="Tripp M."/>
            <person name="Chang C.H."/>
            <person name="Lee J.M."/>
            <person name="Toriumi M.J."/>
            <person name="Chan M.M."/>
            <person name="Tang C.C."/>
            <person name="Onodera C.S."/>
            <person name="Deng J.M."/>
            <person name="Akiyama K."/>
            <person name="Ansari Y."/>
            <person name="Arakawa T."/>
            <person name="Banh J."/>
            <person name="Banno F."/>
            <person name="Bowser L."/>
            <person name="Brooks S.Y."/>
            <person name="Carninci P."/>
            <person name="Chao Q."/>
            <person name="Choy N."/>
            <person name="Enju A."/>
            <person name="Goldsmith A.D."/>
            <person name="Gurjal M."/>
            <person name="Hansen N.F."/>
            <person name="Hayashizaki Y."/>
            <person name="Johnson-Hopson C."/>
            <person name="Hsuan V.W."/>
            <person name="Iida K."/>
            <person name="Karnes M."/>
            <person name="Khan S."/>
            <person name="Koesema E."/>
            <person name="Ishida J."/>
            <person name="Jiang P.X."/>
            <person name="Jones T."/>
            <person name="Kawai J."/>
            <person name="Kamiya A."/>
            <person name="Meyers C."/>
            <person name="Nakajima M."/>
            <person name="Narusaka M."/>
            <person name="Seki M."/>
            <person name="Sakurai T."/>
            <person name="Satou M."/>
            <person name="Tamse R."/>
            <person name="Vaysberg M."/>
            <person name="Wallender E.K."/>
            <person name="Wong C."/>
            <person name="Yamamura Y."/>
            <person name="Yuan S."/>
            <person name="Shinozaki K."/>
            <person name="Davis R.W."/>
            <person name="Theologis A."/>
            <person name="Ecker J.R."/>
        </authorList>
    </citation>
    <scope>NUCLEOTIDE SEQUENCE [LARGE SCALE MRNA] (ISOFORM 1)</scope>
    <source>
        <strain>cv. Columbia</strain>
    </source>
</reference>
<reference key="5">
    <citation type="submission" date="2002-03" db="EMBL/GenBank/DDBJ databases">
        <title>Full-length cDNA from Arabidopsis thaliana.</title>
        <authorList>
            <person name="Brover V.V."/>
            <person name="Troukhan M.E."/>
            <person name="Alexandrov N.A."/>
            <person name="Lu Y.-P."/>
            <person name="Flavell R.B."/>
            <person name="Feldmann K.A."/>
        </authorList>
    </citation>
    <scope>NUCLEOTIDE SEQUENCE [LARGE SCALE MRNA] (ISOFORM 1)</scope>
</reference>
<evidence type="ECO:0000250" key="1">
    <source>
        <dbReference type="UniProtKB" id="O49595"/>
    </source>
</evidence>
<evidence type="ECO:0000255" key="2">
    <source>
        <dbReference type="PROSITE-ProRule" id="PRU00267"/>
    </source>
</evidence>
<evidence type="ECO:0000256" key="3">
    <source>
        <dbReference type="SAM" id="MobiDB-lite"/>
    </source>
</evidence>
<evidence type="ECO:0000305" key="4"/>
<sequence length="151" mass="17499">MTKRAPKSGPLSPSCSGGSSRNLELAVKSSEGARRSTRLRLQPLRKPKTSPKKKPVKLQTKMPKKPATAFFFFLDDFRKQYQEENPDVKSMREIGKTCGEKWKTMTYEEKVKYYDIATEKREEFHRAMTEYTKRMESGAHDESETDSDYSE</sequence>
<dbReference type="EMBL" id="AC004077">
    <property type="protein sequence ID" value="AAC26692.2"/>
    <property type="molecule type" value="Genomic_DNA"/>
</dbReference>
<dbReference type="EMBL" id="AC004481">
    <property type="protein sequence ID" value="AAM14948.1"/>
    <property type="molecule type" value="Genomic_DNA"/>
</dbReference>
<dbReference type="EMBL" id="CP002685">
    <property type="protein sequence ID" value="AEC08975.1"/>
    <property type="molecule type" value="Genomic_DNA"/>
</dbReference>
<dbReference type="EMBL" id="CP002685">
    <property type="protein sequence ID" value="AEC08976.1"/>
    <property type="molecule type" value="Genomic_DNA"/>
</dbReference>
<dbReference type="EMBL" id="CP002685">
    <property type="protein sequence ID" value="ANM62822.1"/>
    <property type="molecule type" value="Genomic_DNA"/>
</dbReference>
<dbReference type="EMBL" id="CP002685">
    <property type="protein sequence ID" value="ANM62823.1"/>
    <property type="molecule type" value="Genomic_DNA"/>
</dbReference>
<dbReference type="EMBL" id="AK118955">
    <property type="protein sequence ID" value="BAC43535.1"/>
    <property type="molecule type" value="mRNA"/>
</dbReference>
<dbReference type="EMBL" id="BT005660">
    <property type="protein sequence ID" value="AAO64080.1"/>
    <property type="molecule type" value="mRNA"/>
</dbReference>
<dbReference type="EMBL" id="AY084626">
    <property type="protein sequence ID" value="AAM61189.1"/>
    <property type="molecule type" value="mRNA"/>
</dbReference>
<dbReference type="PIR" id="T02332">
    <property type="entry name" value="T02332"/>
</dbReference>
<dbReference type="RefSeq" id="NP_001031480.1">
    <molecule id="O64702-2"/>
    <property type="nucleotide sequence ID" value="NM_001036403.1"/>
</dbReference>
<dbReference type="RefSeq" id="NP_001318353.1">
    <molecule id="O64702-1"/>
    <property type="nucleotide sequence ID" value="NM_001336514.1"/>
</dbReference>
<dbReference type="RefSeq" id="NP_001324951.1">
    <molecule id="O64702-1"/>
    <property type="nucleotide sequence ID" value="NM_001336515.1"/>
</dbReference>
<dbReference type="RefSeq" id="NP_565788.1">
    <molecule id="O64702-1"/>
    <property type="nucleotide sequence ID" value="NM_128997.3"/>
</dbReference>
<dbReference type="SMR" id="O64702"/>
<dbReference type="BioGRID" id="3355">
    <property type="interactions" value="14"/>
</dbReference>
<dbReference type="FunCoup" id="O64702">
    <property type="interactions" value="1547"/>
</dbReference>
<dbReference type="IntAct" id="O64702">
    <property type="interactions" value="9"/>
</dbReference>
<dbReference type="STRING" id="3702.O64702"/>
<dbReference type="PaxDb" id="3702-AT2G34450.2"/>
<dbReference type="ProteomicsDB" id="230259">
    <molecule id="O64702-1"/>
</dbReference>
<dbReference type="EnsemblPlants" id="AT2G34450.1">
    <molecule id="O64702-1"/>
    <property type="protein sequence ID" value="AT2G34450.1"/>
    <property type="gene ID" value="AT2G34450"/>
</dbReference>
<dbReference type="EnsemblPlants" id="AT2G34450.2">
    <molecule id="O64702-2"/>
    <property type="protein sequence ID" value="AT2G34450.2"/>
    <property type="gene ID" value="AT2G34450"/>
</dbReference>
<dbReference type="EnsemblPlants" id="AT2G34450.3">
    <molecule id="O64702-1"/>
    <property type="protein sequence ID" value="AT2G34450.3"/>
    <property type="gene ID" value="AT2G34450"/>
</dbReference>
<dbReference type="EnsemblPlants" id="AT2G34450.4">
    <molecule id="O64702-1"/>
    <property type="protein sequence ID" value="AT2G34450.4"/>
    <property type="gene ID" value="AT2G34450"/>
</dbReference>
<dbReference type="GeneID" id="818008"/>
<dbReference type="Gramene" id="AT2G34450.1">
    <molecule id="O64702-1"/>
    <property type="protein sequence ID" value="AT2G34450.1"/>
    <property type="gene ID" value="AT2G34450"/>
</dbReference>
<dbReference type="Gramene" id="AT2G34450.2">
    <molecule id="O64702-2"/>
    <property type="protein sequence ID" value="AT2G34450.2"/>
    <property type="gene ID" value="AT2G34450"/>
</dbReference>
<dbReference type="Gramene" id="AT2G34450.3">
    <molecule id="O64702-1"/>
    <property type="protein sequence ID" value="AT2G34450.3"/>
    <property type="gene ID" value="AT2G34450"/>
</dbReference>
<dbReference type="Gramene" id="AT2G34450.4">
    <molecule id="O64702-1"/>
    <property type="protein sequence ID" value="AT2G34450.4"/>
    <property type="gene ID" value="AT2G34450"/>
</dbReference>
<dbReference type="KEGG" id="ath:AT2G34450"/>
<dbReference type="Araport" id="AT2G34450"/>
<dbReference type="TAIR" id="AT2G34450"/>
<dbReference type="eggNOG" id="KOG0381">
    <property type="taxonomic scope" value="Eukaryota"/>
</dbReference>
<dbReference type="InParanoid" id="O64702"/>
<dbReference type="OMA" id="CRMKTRS"/>
<dbReference type="OrthoDB" id="1919336at2759"/>
<dbReference type="PhylomeDB" id="O64702"/>
<dbReference type="PRO" id="PR:O64702"/>
<dbReference type="Proteomes" id="UP000006548">
    <property type="component" value="Chromosome 2"/>
</dbReference>
<dbReference type="ExpressionAtlas" id="O64702">
    <property type="expression patterns" value="baseline and differential"/>
</dbReference>
<dbReference type="GO" id="GO:0000785">
    <property type="term" value="C:chromatin"/>
    <property type="evidence" value="ECO:0007669"/>
    <property type="project" value="UniProtKB-ARBA"/>
</dbReference>
<dbReference type="GO" id="GO:0005634">
    <property type="term" value="C:nucleus"/>
    <property type="evidence" value="ECO:0007669"/>
    <property type="project" value="UniProtKB-SubCell"/>
</dbReference>
<dbReference type="GO" id="GO:0003682">
    <property type="term" value="F:chromatin binding"/>
    <property type="evidence" value="ECO:0007669"/>
    <property type="project" value="UniProtKB-ARBA"/>
</dbReference>
<dbReference type="GO" id="GO:0003677">
    <property type="term" value="F:DNA binding"/>
    <property type="evidence" value="ECO:0007669"/>
    <property type="project" value="UniProtKB-KW"/>
</dbReference>
<dbReference type="GO" id="GO:0003700">
    <property type="term" value="F:DNA-binding transcription factor activity"/>
    <property type="evidence" value="ECO:0000250"/>
    <property type="project" value="TAIR"/>
</dbReference>
<dbReference type="GO" id="GO:0030527">
    <property type="term" value="F:structural constituent of chromatin"/>
    <property type="evidence" value="ECO:0007669"/>
    <property type="project" value="UniProtKB-ARBA"/>
</dbReference>
<dbReference type="GO" id="GO:0006325">
    <property type="term" value="P:chromatin organization"/>
    <property type="evidence" value="ECO:0007669"/>
    <property type="project" value="UniProtKB-ARBA"/>
</dbReference>
<dbReference type="CDD" id="cd22005">
    <property type="entry name" value="HMG-box_AtHMGB1-like"/>
    <property type="match status" value="1"/>
</dbReference>
<dbReference type="Gene3D" id="1.10.30.10">
    <property type="entry name" value="High mobility group box domain"/>
    <property type="match status" value="1"/>
</dbReference>
<dbReference type="InterPro" id="IPR009071">
    <property type="entry name" value="HMG_box_dom"/>
</dbReference>
<dbReference type="InterPro" id="IPR036910">
    <property type="entry name" value="HMG_box_dom_sf"/>
</dbReference>
<dbReference type="InterPro" id="IPR031061">
    <property type="entry name" value="HMGB_plant"/>
</dbReference>
<dbReference type="PANTHER" id="PTHR46261:SF12">
    <property type="entry name" value="HIGH MOBILITY GROUP B PROTEIN 14"/>
    <property type="match status" value="1"/>
</dbReference>
<dbReference type="PANTHER" id="PTHR46261">
    <property type="entry name" value="HIGH MOBILITY GROUP B PROTEIN 4-RELATED"/>
    <property type="match status" value="1"/>
</dbReference>
<dbReference type="Pfam" id="PF00505">
    <property type="entry name" value="HMG_box"/>
    <property type="match status" value="1"/>
</dbReference>
<dbReference type="SMART" id="SM00398">
    <property type="entry name" value="HMG"/>
    <property type="match status" value="1"/>
</dbReference>
<dbReference type="SUPFAM" id="SSF47095">
    <property type="entry name" value="HMG-box"/>
    <property type="match status" value="1"/>
</dbReference>
<dbReference type="PROSITE" id="PS50118">
    <property type="entry name" value="HMG_BOX_2"/>
    <property type="match status" value="1"/>
</dbReference>
<protein>
    <recommendedName>
        <fullName>High mobility group B protein 14</fullName>
    </recommendedName>
    <alternativeName>
        <fullName>Nucleosome/chromatin assembly factor group D 14</fullName>
    </alternativeName>
</protein>
<name>HMG14_ARATH</name>
<proteinExistence type="evidence at transcript level"/>
<feature type="chain" id="PRO_0000399939" description="High mobility group B protein 14">
    <location>
        <begin position="1"/>
        <end position="151"/>
    </location>
</feature>
<feature type="DNA-binding region" description="HMG box" evidence="2">
    <location>
        <begin position="63"/>
        <end position="132"/>
    </location>
</feature>
<feature type="region of interest" description="Disordered" evidence="3">
    <location>
        <begin position="1"/>
        <end position="62"/>
    </location>
</feature>
<feature type="region of interest" description="Disordered" evidence="3">
    <location>
        <begin position="132"/>
        <end position="151"/>
    </location>
</feature>
<feature type="compositionally biased region" description="Low complexity" evidence="3">
    <location>
        <begin position="7"/>
        <end position="20"/>
    </location>
</feature>
<feature type="compositionally biased region" description="Basic residues" evidence="3">
    <location>
        <begin position="35"/>
        <end position="56"/>
    </location>
</feature>
<feature type="compositionally biased region" description="Basic and acidic residues" evidence="3">
    <location>
        <begin position="132"/>
        <end position="142"/>
    </location>
</feature>
<feature type="modified residue" description="Phosphoserine" evidence="1">
    <location>
        <position position="150"/>
    </location>
</feature>
<feature type="splice variant" id="VSP_039946" description="In isoform 2." evidence="4">
    <original>E</original>
    <variation>EV</variation>
    <location>
        <position position="93"/>
    </location>
</feature>
<organism>
    <name type="scientific">Arabidopsis thaliana</name>
    <name type="common">Mouse-ear cress</name>
    <dbReference type="NCBI Taxonomy" id="3702"/>
    <lineage>
        <taxon>Eukaryota</taxon>
        <taxon>Viridiplantae</taxon>
        <taxon>Streptophyta</taxon>
        <taxon>Embryophyta</taxon>
        <taxon>Tracheophyta</taxon>
        <taxon>Spermatophyta</taxon>
        <taxon>Magnoliopsida</taxon>
        <taxon>eudicotyledons</taxon>
        <taxon>Gunneridae</taxon>
        <taxon>Pentapetalae</taxon>
        <taxon>rosids</taxon>
        <taxon>malvids</taxon>
        <taxon>Brassicales</taxon>
        <taxon>Brassicaceae</taxon>
        <taxon>Camelineae</taxon>
        <taxon>Arabidopsis</taxon>
    </lineage>
</organism>